<proteinExistence type="inferred from homology"/>
<dbReference type="EC" id="6.3.2.4" evidence="2"/>
<dbReference type="EMBL" id="CP001359">
    <property type="protein sequence ID" value="ACL67237.1"/>
    <property type="molecule type" value="Genomic_DNA"/>
</dbReference>
<dbReference type="RefSeq" id="WP_015934968.1">
    <property type="nucleotide sequence ID" value="NC_011891.1"/>
</dbReference>
<dbReference type="SMR" id="B8J8F1"/>
<dbReference type="KEGG" id="acp:A2cp1_3914"/>
<dbReference type="HOGENOM" id="CLU_039268_1_1_7"/>
<dbReference type="UniPathway" id="UPA00219"/>
<dbReference type="Proteomes" id="UP000007089">
    <property type="component" value="Chromosome"/>
</dbReference>
<dbReference type="GO" id="GO:0005737">
    <property type="term" value="C:cytoplasm"/>
    <property type="evidence" value="ECO:0007669"/>
    <property type="project" value="UniProtKB-SubCell"/>
</dbReference>
<dbReference type="GO" id="GO:0005524">
    <property type="term" value="F:ATP binding"/>
    <property type="evidence" value="ECO:0007669"/>
    <property type="project" value="UniProtKB-KW"/>
</dbReference>
<dbReference type="GO" id="GO:0008716">
    <property type="term" value="F:D-alanine-D-alanine ligase activity"/>
    <property type="evidence" value="ECO:0007669"/>
    <property type="project" value="UniProtKB-UniRule"/>
</dbReference>
<dbReference type="GO" id="GO:0046872">
    <property type="term" value="F:metal ion binding"/>
    <property type="evidence" value="ECO:0007669"/>
    <property type="project" value="UniProtKB-KW"/>
</dbReference>
<dbReference type="GO" id="GO:0071555">
    <property type="term" value="P:cell wall organization"/>
    <property type="evidence" value="ECO:0007669"/>
    <property type="project" value="UniProtKB-KW"/>
</dbReference>
<dbReference type="GO" id="GO:0009252">
    <property type="term" value="P:peptidoglycan biosynthetic process"/>
    <property type="evidence" value="ECO:0007669"/>
    <property type="project" value="UniProtKB-UniRule"/>
</dbReference>
<dbReference type="GO" id="GO:0008360">
    <property type="term" value="P:regulation of cell shape"/>
    <property type="evidence" value="ECO:0007669"/>
    <property type="project" value="UniProtKB-KW"/>
</dbReference>
<dbReference type="FunFam" id="3.30.470.20:FF:000008">
    <property type="entry name" value="D-alanine--D-alanine ligase"/>
    <property type="match status" value="1"/>
</dbReference>
<dbReference type="Gene3D" id="3.40.50.20">
    <property type="match status" value="1"/>
</dbReference>
<dbReference type="Gene3D" id="3.30.1490.20">
    <property type="entry name" value="ATP-grasp fold, A domain"/>
    <property type="match status" value="1"/>
</dbReference>
<dbReference type="Gene3D" id="3.30.470.20">
    <property type="entry name" value="ATP-grasp fold, B domain"/>
    <property type="match status" value="1"/>
</dbReference>
<dbReference type="HAMAP" id="MF_00047">
    <property type="entry name" value="Dala_Dala_lig"/>
    <property type="match status" value="1"/>
</dbReference>
<dbReference type="InterPro" id="IPR011761">
    <property type="entry name" value="ATP-grasp"/>
</dbReference>
<dbReference type="InterPro" id="IPR013815">
    <property type="entry name" value="ATP_grasp_subdomain_1"/>
</dbReference>
<dbReference type="InterPro" id="IPR000291">
    <property type="entry name" value="D-Ala_lig_Van_CS"/>
</dbReference>
<dbReference type="InterPro" id="IPR005905">
    <property type="entry name" value="D_ala_D_ala"/>
</dbReference>
<dbReference type="InterPro" id="IPR011095">
    <property type="entry name" value="Dala_Dala_lig_C"/>
</dbReference>
<dbReference type="InterPro" id="IPR011127">
    <property type="entry name" value="Dala_Dala_lig_N"/>
</dbReference>
<dbReference type="InterPro" id="IPR016185">
    <property type="entry name" value="PreATP-grasp_dom_sf"/>
</dbReference>
<dbReference type="NCBIfam" id="TIGR01205">
    <property type="entry name" value="D_ala_D_alaTIGR"/>
    <property type="match status" value="1"/>
</dbReference>
<dbReference type="NCBIfam" id="NF002378">
    <property type="entry name" value="PRK01372.1"/>
    <property type="match status" value="1"/>
</dbReference>
<dbReference type="PANTHER" id="PTHR23132">
    <property type="entry name" value="D-ALANINE--D-ALANINE LIGASE"/>
    <property type="match status" value="1"/>
</dbReference>
<dbReference type="PANTHER" id="PTHR23132:SF23">
    <property type="entry name" value="D-ALANINE--D-ALANINE LIGASE B"/>
    <property type="match status" value="1"/>
</dbReference>
<dbReference type="Pfam" id="PF07478">
    <property type="entry name" value="Dala_Dala_lig_C"/>
    <property type="match status" value="1"/>
</dbReference>
<dbReference type="Pfam" id="PF01820">
    <property type="entry name" value="Dala_Dala_lig_N"/>
    <property type="match status" value="2"/>
</dbReference>
<dbReference type="PIRSF" id="PIRSF039102">
    <property type="entry name" value="Ddl/VanB"/>
    <property type="match status" value="1"/>
</dbReference>
<dbReference type="SUPFAM" id="SSF56059">
    <property type="entry name" value="Glutathione synthetase ATP-binding domain-like"/>
    <property type="match status" value="1"/>
</dbReference>
<dbReference type="SUPFAM" id="SSF52440">
    <property type="entry name" value="PreATP-grasp domain"/>
    <property type="match status" value="1"/>
</dbReference>
<dbReference type="PROSITE" id="PS50975">
    <property type="entry name" value="ATP_GRASP"/>
    <property type="match status" value="1"/>
</dbReference>
<dbReference type="PROSITE" id="PS00843">
    <property type="entry name" value="DALA_DALA_LIGASE_1"/>
    <property type="match status" value="1"/>
</dbReference>
<dbReference type="PROSITE" id="PS00844">
    <property type="entry name" value="DALA_DALA_LIGASE_2"/>
    <property type="match status" value="1"/>
</dbReference>
<comment type="function">
    <text evidence="2">Cell wall formation.</text>
</comment>
<comment type="catalytic activity">
    <reaction evidence="2">
        <text>2 D-alanine + ATP = D-alanyl-D-alanine + ADP + phosphate + H(+)</text>
        <dbReference type="Rhea" id="RHEA:11224"/>
        <dbReference type="ChEBI" id="CHEBI:15378"/>
        <dbReference type="ChEBI" id="CHEBI:30616"/>
        <dbReference type="ChEBI" id="CHEBI:43474"/>
        <dbReference type="ChEBI" id="CHEBI:57416"/>
        <dbReference type="ChEBI" id="CHEBI:57822"/>
        <dbReference type="ChEBI" id="CHEBI:456216"/>
        <dbReference type="EC" id="6.3.2.4"/>
    </reaction>
</comment>
<comment type="cofactor">
    <cofactor evidence="1">
        <name>Mg(2+)</name>
        <dbReference type="ChEBI" id="CHEBI:18420"/>
    </cofactor>
    <cofactor evidence="1">
        <name>Mn(2+)</name>
        <dbReference type="ChEBI" id="CHEBI:29035"/>
    </cofactor>
    <text evidence="1">Binds 2 magnesium or manganese ions per subunit.</text>
</comment>
<comment type="pathway">
    <text evidence="2">Cell wall biogenesis; peptidoglycan biosynthesis.</text>
</comment>
<comment type="subcellular location">
    <subcellularLocation>
        <location evidence="2">Cytoplasm</location>
    </subcellularLocation>
</comment>
<comment type="similarity">
    <text evidence="2">Belongs to the D-alanine--D-alanine ligase family.</text>
</comment>
<feature type="chain" id="PRO_1000117443" description="D-alanine--D-alanine ligase">
    <location>
        <begin position="1"/>
        <end position="308"/>
    </location>
</feature>
<feature type="domain" description="ATP-grasp" evidence="2">
    <location>
        <begin position="105"/>
        <end position="302"/>
    </location>
</feature>
<feature type="binding site" evidence="2">
    <location>
        <begin position="133"/>
        <end position="188"/>
    </location>
    <ligand>
        <name>ATP</name>
        <dbReference type="ChEBI" id="CHEBI:30616"/>
    </ligand>
</feature>
<feature type="binding site" evidence="2">
    <location>
        <position position="256"/>
    </location>
    <ligand>
        <name>Mg(2+)</name>
        <dbReference type="ChEBI" id="CHEBI:18420"/>
        <label>1</label>
    </ligand>
</feature>
<feature type="binding site" evidence="2">
    <location>
        <position position="269"/>
    </location>
    <ligand>
        <name>Mg(2+)</name>
        <dbReference type="ChEBI" id="CHEBI:18420"/>
        <label>1</label>
    </ligand>
</feature>
<feature type="binding site" evidence="2">
    <location>
        <position position="269"/>
    </location>
    <ligand>
        <name>Mg(2+)</name>
        <dbReference type="ChEBI" id="CHEBI:18420"/>
        <label>2</label>
    </ligand>
</feature>
<feature type="binding site" evidence="2">
    <location>
        <position position="271"/>
    </location>
    <ligand>
        <name>Mg(2+)</name>
        <dbReference type="ChEBI" id="CHEBI:18420"/>
        <label>2</label>
    </ligand>
</feature>
<keyword id="KW-0067">ATP-binding</keyword>
<keyword id="KW-0133">Cell shape</keyword>
<keyword id="KW-0961">Cell wall biogenesis/degradation</keyword>
<keyword id="KW-0963">Cytoplasm</keyword>
<keyword id="KW-0436">Ligase</keyword>
<keyword id="KW-0460">Magnesium</keyword>
<keyword id="KW-0464">Manganese</keyword>
<keyword id="KW-0479">Metal-binding</keyword>
<keyword id="KW-0547">Nucleotide-binding</keyword>
<keyword id="KW-0573">Peptidoglycan synthesis</keyword>
<organism>
    <name type="scientific">Anaeromyxobacter dehalogenans (strain 2CP-1 / ATCC BAA-258)</name>
    <dbReference type="NCBI Taxonomy" id="455488"/>
    <lineage>
        <taxon>Bacteria</taxon>
        <taxon>Pseudomonadati</taxon>
        <taxon>Myxococcota</taxon>
        <taxon>Myxococcia</taxon>
        <taxon>Myxococcales</taxon>
        <taxon>Cystobacterineae</taxon>
        <taxon>Anaeromyxobacteraceae</taxon>
        <taxon>Anaeromyxobacter</taxon>
    </lineage>
</organism>
<reference key="1">
    <citation type="submission" date="2009-01" db="EMBL/GenBank/DDBJ databases">
        <title>Complete sequence of Anaeromyxobacter dehalogenans 2CP-1.</title>
        <authorList>
            <person name="Lucas S."/>
            <person name="Copeland A."/>
            <person name="Lapidus A."/>
            <person name="Glavina del Rio T."/>
            <person name="Dalin E."/>
            <person name="Tice H."/>
            <person name="Bruce D."/>
            <person name="Goodwin L."/>
            <person name="Pitluck S."/>
            <person name="Saunders E."/>
            <person name="Brettin T."/>
            <person name="Detter J.C."/>
            <person name="Han C."/>
            <person name="Larimer F."/>
            <person name="Land M."/>
            <person name="Hauser L."/>
            <person name="Kyrpides N."/>
            <person name="Ovchinnikova G."/>
            <person name="Beliaev A.S."/>
            <person name="Richardson P."/>
        </authorList>
    </citation>
    <scope>NUCLEOTIDE SEQUENCE [LARGE SCALE GENOMIC DNA]</scope>
    <source>
        <strain>2CP-1 / ATCC BAA-258</strain>
    </source>
</reference>
<sequence length="308" mass="32036">MSTWTGKRVAVLYGGRSSEREVSLRTGAACADALRQKGHEVVLLDVDLEVAARLRAERVEVAFVALHGRFGEDGSIQGLLESMAIPYTGSGVLASAMGMDKTVSKAIFRSLGLAVADYRVFPRASAGSIGVGDLPFGLPCVVKPAGEGSSVGVHLVNEAAELGPACRDAASHAGDVIVERYVKGTEVDVAVLDGKALGAIEIVPANAFYDYAAKYTAGTTKYFYPARLPEAHVRAVMQAAEAAHRGIGCSGVTRVDFIVAGDGTPYILEVNTLPGMTATSLVPKIAAGLGLSFPDLCERILDGAALKA</sequence>
<accession>B8J8F1</accession>
<protein>
    <recommendedName>
        <fullName evidence="2">D-alanine--D-alanine ligase</fullName>
        <ecNumber evidence="2">6.3.2.4</ecNumber>
    </recommendedName>
    <alternativeName>
        <fullName evidence="2">D-Ala-D-Ala ligase</fullName>
    </alternativeName>
    <alternativeName>
        <fullName evidence="2">D-alanylalanine synthetase</fullName>
    </alternativeName>
</protein>
<name>DDL_ANAD2</name>
<evidence type="ECO:0000250" key="1"/>
<evidence type="ECO:0000255" key="2">
    <source>
        <dbReference type="HAMAP-Rule" id="MF_00047"/>
    </source>
</evidence>
<gene>
    <name evidence="2" type="primary">ddl</name>
    <name type="ordered locus">A2cp1_3914</name>
</gene>